<evidence type="ECO:0000255" key="1">
    <source>
        <dbReference type="HAMAP-Rule" id="MF_01365"/>
    </source>
</evidence>
<evidence type="ECO:0000305" key="2"/>
<proteinExistence type="inferred from homology"/>
<accession>A1WVA7</accession>
<keyword id="KW-1185">Reference proteome</keyword>
<keyword id="KW-0687">Ribonucleoprotein</keyword>
<keyword id="KW-0689">Ribosomal protein</keyword>
<keyword id="KW-0694">RNA-binding</keyword>
<keyword id="KW-0699">rRNA-binding</keyword>
<reference key="1">
    <citation type="submission" date="2006-12" db="EMBL/GenBank/DDBJ databases">
        <title>Complete sequence of Halorhodospira halophila SL1.</title>
        <authorList>
            <consortium name="US DOE Joint Genome Institute"/>
            <person name="Copeland A."/>
            <person name="Lucas S."/>
            <person name="Lapidus A."/>
            <person name="Barry K."/>
            <person name="Detter J.C."/>
            <person name="Glavina del Rio T."/>
            <person name="Hammon N."/>
            <person name="Israni S."/>
            <person name="Dalin E."/>
            <person name="Tice H."/>
            <person name="Pitluck S."/>
            <person name="Saunders E."/>
            <person name="Brettin T."/>
            <person name="Bruce D."/>
            <person name="Han C."/>
            <person name="Tapia R."/>
            <person name="Schmutz J."/>
            <person name="Larimer F."/>
            <person name="Land M."/>
            <person name="Hauser L."/>
            <person name="Kyrpides N."/>
            <person name="Mikhailova N."/>
            <person name="Hoff W."/>
            <person name="Richardson P."/>
        </authorList>
    </citation>
    <scope>NUCLEOTIDE SEQUENCE [LARGE SCALE GENOMIC DNA]</scope>
    <source>
        <strain>DSM 244 / SL1</strain>
    </source>
</reference>
<dbReference type="EMBL" id="CP000544">
    <property type="protein sequence ID" value="ABM61619.1"/>
    <property type="molecule type" value="Genomic_DNA"/>
</dbReference>
<dbReference type="RefSeq" id="WP_011813642.1">
    <property type="nucleotide sequence ID" value="NC_008789.1"/>
</dbReference>
<dbReference type="SMR" id="A1WVA7"/>
<dbReference type="STRING" id="349124.Hhal_0843"/>
<dbReference type="KEGG" id="hha:Hhal_0843"/>
<dbReference type="eggNOG" id="COG0097">
    <property type="taxonomic scope" value="Bacteria"/>
</dbReference>
<dbReference type="HOGENOM" id="CLU_065464_1_2_6"/>
<dbReference type="OrthoDB" id="9805007at2"/>
<dbReference type="Proteomes" id="UP000000647">
    <property type="component" value="Chromosome"/>
</dbReference>
<dbReference type="GO" id="GO:0022625">
    <property type="term" value="C:cytosolic large ribosomal subunit"/>
    <property type="evidence" value="ECO:0007669"/>
    <property type="project" value="TreeGrafter"/>
</dbReference>
<dbReference type="GO" id="GO:0019843">
    <property type="term" value="F:rRNA binding"/>
    <property type="evidence" value="ECO:0007669"/>
    <property type="project" value="UniProtKB-UniRule"/>
</dbReference>
<dbReference type="GO" id="GO:0003735">
    <property type="term" value="F:structural constituent of ribosome"/>
    <property type="evidence" value="ECO:0007669"/>
    <property type="project" value="InterPro"/>
</dbReference>
<dbReference type="GO" id="GO:0002181">
    <property type="term" value="P:cytoplasmic translation"/>
    <property type="evidence" value="ECO:0007669"/>
    <property type="project" value="TreeGrafter"/>
</dbReference>
<dbReference type="FunFam" id="3.90.930.12:FF:000001">
    <property type="entry name" value="50S ribosomal protein L6"/>
    <property type="match status" value="1"/>
</dbReference>
<dbReference type="FunFam" id="3.90.930.12:FF:000002">
    <property type="entry name" value="50S ribosomal protein L6"/>
    <property type="match status" value="1"/>
</dbReference>
<dbReference type="Gene3D" id="3.90.930.12">
    <property type="entry name" value="Ribosomal protein L6, alpha-beta domain"/>
    <property type="match status" value="2"/>
</dbReference>
<dbReference type="HAMAP" id="MF_01365_B">
    <property type="entry name" value="Ribosomal_uL6_B"/>
    <property type="match status" value="1"/>
</dbReference>
<dbReference type="InterPro" id="IPR000702">
    <property type="entry name" value="Ribosomal_uL6-like"/>
</dbReference>
<dbReference type="InterPro" id="IPR036789">
    <property type="entry name" value="Ribosomal_uL6-like_a/b-dom_sf"/>
</dbReference>
<dbReference type="InterPro" id="IPR020040">
    <property type="entry name" value="Ribosomal_uL6_a/b-dom"/>
</dbReference>
<dbReference type="InterPro" id="IPR019906">
    <property type="entry name" value="Ribosomal_uL6_bac-type"/>
</dbReference>
<dbReference type="InterPro" id="IPR002358">
    <property type="entry name" value="Ribosomal_uL6_CS"/>
</dbReference>
<dbReference type="NCBIfam" id="TIGR03654">
    <property type="entry name" value="L6_bact"/>
    <property type="match status" value="1"/>
</dbReference>
<dbReference type="PANTHER" id="PTHR11655">
    <property type="entry name" value="60S/50S RIBOSOMAL PROTEIN L6/L9"/>
    <property type="match status" value="1"/>
</dbReference>
<dbReference type="PANTHER" id="PTHR11655:SF14">
    <property type="entry name" value="LARGE RIBOSOMAL SUBUNIT PROTEIN UL6M"/>
    <property type="match status" value="1"/>
</dbReference>
<dbReference type="Pfam" id="PF00347">
    <property type="entry name" value="Ribosomal_L6"/>
    <property type="match status" value="2"/>
</dbReference>
<dbReference type="PIRSF" id="PIRSF002162">
    <property type="entry name" value="Ribosomal_L6"/>
    <property type="match status" value="1"/>
</dbReference>
<dbReference type="PRINTS" id="PR00059">
    <property type="entry name" value="RIBOSOMALL6"/>
</dbReference>
<dbReference type="SUPFAM" id="SSF56053">
    <property type="entry name" value="Ribosomal protein L6"/>
    <property type="match status" value="2"/>
</dbReference>
<dbReference type="PROSITE" id="PS00525">
    <property type="entry name" value="RIBOSOMAL_L6_1"/>
    <property type="match status" value="1"/>
</dbReference>
<sequence>MSRVAKAPVEVPSGVEVTLQGNDIQVKGPKGQMAWSCHRLVSLNQEEGTLTFEPRQQSTRAVALTGTTRALVQNMVTGVSEGFERRLELKGVGYRAQVQGSTLNLTLGFSHPVHYEIPEGVTIECPSQTEVVVKGADKQQVGQVAAQIRGYRPPEPYKGKGVRYADERVVLKEAKKK</sequence>
<organism>
    <name type="scientific">Halorhodospira halophila (strain DSM 244 / SL1)</name>
    <name type="common">Ectothiorhodospira halophila (strain DSM 244 / SL1)</name>
    <dbReference type="NCBI Taxonomy" id="349124"/>
    <lineage>
        <taxon>Bacteria</taxon>
        <taxon>Pseudomonadati</taxon>
        <taxon>Pseudomonadota</taxon>
        <taxon>Gammaproteobacteria</taxon>
        <taxon>Chromatiales</taxon>
        <taxon>Ectothiorhodospiraceae</taxon>
        <taxon>Halorhodospira</taxon>
    </lineage>
</organism>
<comment type="function">
    <text evidence="1">This protein binds to the 23S rRNA, and is important in its secondary structure. It is located near the subunit interface in the base of the L7/L12 stalk, and near the tRNA binding site of the peptidyltransferase center.</text>
</comment>
<comment type="subunit">
    <text evidence="1">Part of the 50S ribosomal subunit.</text>
</comment>
<comment type="similarity">
    <text evidence="1">Belongs to the universal ribosomal protein uL6 family.</text>
</comment>
<protein>
    <recommendedName>
        <fullName evidence="1">Large ribosomal subunit protein uL6</fullName>
    </recommendedName>
    <alternativeName>
        <fullName evidence="2">50S ribosomal protein L6</fullName>
    </alternativeName>
</protein>
<feature type="chain" id="PRO_1000055238" description="Large ribosomal subunit protein uL6">
    <location>
        <begin position="1"/>
        <end position="177"/>
    </location>
</feature>
<name>RL6_HALHL</name>
<gene>
    <name evidence="1" type="primary">rplF</name>
    <name type="ordered locus">Hhal_0843</name>
</gene>